<reference key="1">
    <citation type="submission" date="2001-11" db="EMBL/GenBank/DDBJ databases">
        <title>Mouse mRNAs expressed in the spinal cord.</title>
        <authorList>
            <person name="Nishizawa M."/>
            <person name="Minami T."/>
            <person name="Ito S."/>
        </authorList>
    </citation>
    <scope>NUCLEOTIDE SEQUENCE [MRNA] (ISOFORM 3)</scope>
    <source>
        <strain>ddY</strain>
        <tissue>Spinal cord</tissue>
    </source>
</reference>
<reference key="2">
    <citation type="journal article" date="2009" name="PLoS Biol.">
        <title>Lineage-specific biology revealed by a finished genome assembly of the mouse.</title>
        <authorList>
            <person name="Church D.M."/>
            <person name="Goodstadt L."/>
            <person name="Hillier L.W."/>
            <person name="Zody M.C."/>
            <person name="Goldstein S."/>
            <person name="She X."/>
            <person name="Bult C.J."/>
            <person name="Agarwala R."/>
            <person name="Cherry J.L."/>
            <person name="DiCuccio M."/>
            <person name="Hlavina W."/>
            <person name="Kapustin Y."/>
            <person name="Meric P."/>
            <person name="Maglott D."/>
            <person name="Birtle Z."/>
            <person name="Marques A.C."/>
            <person name="Graves T."/>
            <person name="Zhou S."/>
            <person name="Teague B."/>
            <person name="Potamousis K."/>
            <person name="Churas C."/>
            <person name="Place M."/>
            <person name="Herschleb J."/>
            <person name="Runnheim R."/>
            <person name="Forrest D."/>
            <person name="Amos-Landgraf J."/>
            <person name="Schwartz D.C."/>
            <person name="Cheng Z."/>
            <person name="Lindblad-Toh K."/>
            <person name="Eichler E.E."/>
            <person name="Ponting C.P."/>
        </authorList>
    </citation>
    <scope>NUCLEOTIDE SEQUENCE [LARGE SCALE GENOMIC DNA]</scope>
    <source>
        <strain>C57BL/6J</strain>
    </source>
</reference>
<reference key="3">
    <citation type="journal article" date="2004" name="Genome Res.">
        <title>The status, quality, and expansion of the NIH full-length cDNA project: the Mammalian Gene Collection (MGC).</title>
        <authorList>
            <consortium name="The MGC Project Team"/>
        </authorList>
    </citation>
    <scope>NUCLEOTIDE SEQUENCE [LARGE SCALE MRNA] (ISOFORMS 1 AND 2)</scope>
    <source>
        <strain>C57BL/6J</strain>
        <tissue>Brain</tissue>
        <tissue>Eye</tissue>
    </source>
</reference>
<name>RHG36_MOUSE</name>
<proteinExistence type="evidence at transcript level"/>
<keyword id="KW-0025">Alternative splicing</keyword>
<keyword id="KW-0343">GTPase activation</keyword>
<keyword id="KW-1185">Reference proteome</keyword>
<comment type="function">
    <text evidence="1">GTPase activator for the Rho-type GTPases by converting them to an inactive GDP-bound state.</text>
</comment>
<comment type="subunit">
    <text evidence="2">May interacts (via the Rho-GAP domain) with the active form of RAC1.</text>
</comment>
<comment type="alternative products">
    <event type="alternative splicing"/>
    <isoform>
        <id>B1AUC7-1</id>
        <name>1</name>
        <sequence type="displayed"/>
    </isoform>
    <isoform>
        <id>B1AUC7-2</id>
        <name>2</name>
        <sequence type="described" ref="VSP_039238"/>
    </isoform>
    <isoform>
        <id>B1AUC7-3</id>
        <name>3</name>
        <sequence type="described" ref="VSP_039237"/>
    </isoform>
</comment>
<comment type="sequence caution" evidence="7">
    <conflict type="erroneous gene model prediction">
        <sequence resource="EMBL-CDS" id="CAM17960"/>
    </conflict>
</comment>
<comment type="sequence caution" evidence="7">
    <conflict type="erroneous gene model prediction">
        <sequence resource="EMBL-CDS" id="CAM17961"/>
    </conflict>
</comment>
<organism>
    <name type="scientific">Mus musculus</name>
    <name type="common">Mouse</name>
    <dbReference type="NCBI Taxonomy" id="10090"/>
    <lineage>
        <taxon>Eukaryota</taxon>
        <taxon>Metazoa</taxon>
        <taxon>Chordata</taxon>
        <taxon>Craniata</taxon>
        <taxon>Vertebrata</taxon>
        <taxon>Euteleostomi</taxon>
        <taxon>Mammalia</taxon>
        <taxon>Eutheria</taxon>
        <taxon>Euarchontoglires</taxon>
        <taxon>Glires</taxon>
        <taxon>Rodentia</taxon>
        <taxon>Myomorpha</taxon>
        <taxon>Muroidea</taxon>
        <taxon>Muridae</taxon>
        <taxon>Murinae</taxon>
        <taxon>Mus</taxon>
        <taxon>Mus</taxon>
    </lineage>
</organism>
<gene>
    <name type="primary">Arhgap36</name>
</gene>
<evidence type="ECO:0000250" key="1"/>
<evidence type="ECO:0000250" key="2">
    <source>
        <dbReference type="UniProtKB" id="Q6ZRI8"/>
    </source>
</evidence>
<evidence type="ECO:0000255" key="3">
    <source>
        <dbReference type="PROSITE-ProRule" id="PRU00172"/>
    </source>
</evidence>
<evidence type="ECO:0000256" key="4">
    <source>
        <dbReference type="SAM" id="MobiDB-lite"/>
    </source>
</evidence>
<evidence type="ECO:0000303" key="5">
    <source>
    </source>
</evidence>
<evidence type="ECO:0000303" key="6">
    <source ref="1"/>
</evidence>
<evidence type="ECO:0000305" key="7"/>
<dbReference type="EMBL" id="AB073967">
    <property type="protein sequence ID" value="BAF81999.1"/>
    <property type="molecule type" value="mRNA"/>
</dbReference>
<dbReference type="EMBL" id="AL670305">
    <property type="protein sequence ID" value="CAM17960.1"/>
    <property type="status" value="ALT_SEQ"/>
    <property type="molecule type" value="Genomic_DNA"/>
</dbReference>
<dbReference type="EMBL" id="AL670305">
    <property type="protein sequence ID" value="CAM17961.1"/>
    <property type="status" value="ALT_SEQ"/>
    <property type="molecule type" value="Genomic_DNA"/>
</dbReference>
<dbReference type="EMBL" id="AL670305">
    <property type="protein sequence ID" value="CAM17962.1"/>
    <property type="molecule type" value="Genomic_DNA"/>
</dbReference>
<dbReference type="EMBL" id="BC090672">
    <property type="protein sequence ID" value="AAH90672.1"/>
    <property type="molecule type" value="mRNA"/>
</dbReference>
<dbReference type="EMBL" id="BC145645">
    <property type="protein sequence ID" value="AAI45646.1"/>
    <property type="molecule type" value="mRNA"/>
</dbReference>
<dbReference type="CCDS" id="CCDS40963.1">
    <molecule id="B1AUC7-1"/>
</dbReference>
<dbReference type="RefSeq" id="NP_001074592.1">
    <molecule id="B1AUC7-1"/>
    <property type="nucleotide sequence ID" value="NM_001081123.2"/>
</dbReference>
<dbReference type="RefSeq" id="NP_001343323.1">
    <molecule id="B1AUC7-2"/>
    <property type="nucleotide sequence ID" value="NM_001356394.1"/>
</dbReference>
<dbReference type="RefSeq" id="XP_006541617.1">
    <molecule id="B1AUC7-3"/>
    <property type="nucleotide sequence ID" value="XM_006541554.5"/>
</dbReference>
<dbReference type="RefSeq" id="XP_006541618.1">
    <molecule id="B1AUC7-3"/>
    <property type="nucleotide sequence ID" value="XM_006541555.4"/>
</dbReference>
<dbReference type="RefSeq" id="XP_011249322.1">
    <property type="nucleotide sequence ID" value="XM_011251020.1"/>
</dbReference>
<dbReference type="RefSeq" id="XP_017174122.1">
    <molecule id="B1AUC7-3"/>
    <property type="nucleotide sequence ID" value="XM_017318633.2"/>
</dbReference>
<dbReference type="SMR" id="B1AUC7"/>
<dbReference type="FunCoup" id="B1AUC7">
    <property type="interactions" value="106"/>
</dbReference>
<dbReference type="STRING" id="10090.ENSMUSP00000110554"/>
<dbReference type="iPTMnet" id="B1AUC7"/>
<dbReference type="PhosphoSitePlus" id="B1AUC7"/>
<dbReference type="jPOST" id="B1AUC7"/>
<dbReference type="PaxDb" id="10090-ENSMUSP00000110554"/>
<dbReference type="ProteomicsDB" id="255211">
    <molecule id="B1AUC7-1"/>
</dbReference>
<dbReference type="ProteomicsDB" id="255212">
    <molecule id="B1AUC7-2"/>
</dbReference>
<dbReference type="ProteomicsDB" id="255213">
    <molecule id="B1AUC7-3"/>
</dbReference>
<dbReference type="Antibodypedia" id="423">
    <property type="antibodies" value="110 antibodies from 22 providers"/>
</dbReference>
<dbReference type="Ensembl" id="ENSMUST00000114904.10">
    <molecule id="B1AUC7-1"/>
    <property type="protein sequence ID" value="ENSMUSP00000110554.4"/>
    <property type="gene ID" value="ENSMUSG00000036198.13"/>
</dbReference>
<dbReference type="GeneID" id="75404"/>
<dbReference type="KEGG" id="mmu:75404"/>
<dbReference type="UCSC" id="uc009tdc.2">
    <molecule id="B1AUC7-1"/>
    <property type="organism name" value="mouse"/>
</dbReference>
<dbReference type="AGR" id="MGI:1922654"/>
<dbReference type="CTD" id="158763"/>
<dbReference type="MGI" id="MGI:1922654">
    <property type="gene designation" value="Arhgap36"/>
</dbReference>
<dbReference type="VEuPathDB" id="HostDB:ENSMUSG00000036198"/>
<dbReference type="eggNOG" id="KOG2710">
    <property type="taxonomic scope" value="Eukaryota"/>
</dbReference>
<dbReference type="GeneTree" id="ENSGT00940000153904"/>
<dbReference type="InParanoid" id="B1AUC7"/>
<dbReference type="OMA" id="NTFEKWF"/>
<dbReference type="OrthoDB" id="10024839at2759"/>
<dbReference type="PhylomeDB" id="B1AUC7"/>
<dbReference type="TreeFam" id="TF316710"/>
<dbReference type="BioGRID-ORCS" id="75404">
    <property type="hits" value="1 hit in 80 CRISPR screens"/>
</dbReference>
<dbReference type="PRO" id="PR:B1AUC7"/>
<dbReference type="Proteomes" id="UP000000589">
    <property type="component" value="Chromosome X"/>
</dbReference>
<dbReference type="RNAct" id="B1AUC7">
    <property type="molecule type" value="protein"/>
</dbReference>
<dbReference type="Bgee" id="ENSMUSG00000036198">
    <property type="expression patterns" value="Expressed in chest muscle and 100 other cell types or tissues"/>
</dbReference>
<dbReference type="ExpressionAtlas" id="B1AUC7">
    <property type="expression patterns" value="baseline and differential"/>
</dbReference>
<dbReference type="GO" id="GO:0005096">
    <property type="term" value="F:GTPase activator activity"/>
    <property type="evidence" value="ECO:0007669"/>
    <property type="project" value="UniProtKB-KW"/>
</dbReference>
<dbReference type="GO" id="GO:0007165">
    <property type="term" value="P:signal transduction"/>
    <property type="evidence" value="ECO:0007669"/>
    <property type="project" value="InterPro"/>
</dbReference>
<dbReference type="CDD" id="cd04376">
    <property type="entry name" value="RhoGAP_ARHGAP6"/>
    <property type="match status" value="1"/>
</dbReference>
<dbReference type="FunFam" id="1.10.555.10:FF:000017">
    <property type="entry name" value="Rho GTPase activating protein 6"/>
    <property type="match status" value="1"/>
</dbReference>
<dbReference type="Gene3D" id="1.10.555.10">
    <property type="entry name" value="Rho GTPase activation protein"/>
    <property type="match status" value="1"/>
</dbReference>
<dbReference type="InterPro" id="IPR041852">
    <property type="entry name" value="ARHGAP6_RhoGAP"/>
</dbReference>
<dbReference type="InterPro" id="IPR008936">
    <property type="entry name" value="Rho_GTPase_activation_prot"/>
</dbReference>
<dbReference type="InterPro" id="IPR037863">
    <property type="entry name" value="RHOGAP6/36"/>
</dbReference>
<dbReference type="InterPro" id="IPR000198">
    <property type="entry name" value="RhoGAP_dom"/>
</dbReference>
<dbReference type="PANTHER" id="PTHR12635:SF8">
    <property type="entry name" value="RHO GTPASE-ACTIVATING PROTEIN 36"/>
    <property type="match status" value="1"/>
</dbReference>
<dbReference type="PANTHER" id="PTHR12635">
    <property type="entry name" value="RHO-GTPASE-ACTIVATING PROTEIN 6 FAMILY MEMBER"/>
    <property type="match status" value="1"/>
</dbReference>
<dbReference type="Pfam" id="PF00620">
    <property type="entry name" value="RhoGAP"/>
    <property type="match status" value="1"/>
</dbReference>
<dbReference type="SMART" id="SM00324">
    <property type="entry name" value="RhoGAP"/>
    <property type="match status" value="1"/>
</dbReference>
<dbReference type="SUPFAM" id="SSF48350">
    <property type="entry name" value="GTPase activation domain, GAP"/>
    <property type="match status" value="1"/>
</dbReference>
<dbReference type="PROSITE" id="PS50238">
    <property type="entry name" value="RHOGAP"/>
    <property type="match status" value="1"/>
</dbReference>
<protein>
    <recommendedName>
        <fullName>Rho GTPase-activating protein 36</fullName>
    </recommendedName>
</protein>
<feature type="chain" id="PRO_0000394288" description="Rho GTPase-activating protein 36">
    <location>
        <begin position="1"/>
        <end position="590"/>
    </location>
</feature>
<feature type="domain" description="Rho-GAP" evidence="3">
    <location>
        <begin position="214"/>
        <end position="414"/>
    </location>
</feature>
<feature type="region of interest" description="Disordered" evidence="4">
    <location>
        <begin position="526"/>
        <end position="590"/>
    </location>
</feature>
<feature type="site" description="Arginine finger; crucial for GTP hydrolysis by stabilizing the transition state" evidence="3">
    <location>
        <position position="246"/>
    </location>
</feature>
<feature type="splice variant" id="VSP_039237" description="In isoform 3." evidence="6">
    <location>
        <begin position="1"/>
        <end position="34"/>
    </location>
</feature>
<feature type="splice variant" id="VSP_039238" description="In isoform 2." evidence="5">
    <original>MAWMLDCLFASAFEPRPRR</original>
    <variation>MKL</variation>
    <location>
        <begin position="1"/>
        <end position="19"/>
    </location>
</feature>
<feature type="sequence conflict" description="In Ref. 1; BAF81999 and 3; AAI45646." evidence="7" ref="1 3">
    <original>V</original>
    <variation>I</variation>
    <location>
        <position position="352"/>
    </location>
</feature>
<feature type="sequence conflict" description="In Ref. 1; BAF81999 and 3; AAI45646." evidence="7" ref="1 3">
    <original>V</original>
    <variation>E</variation>
    <location>
        <position position="538"/>
    </location>
</feature>
<sequence>MAWMLDCLFASAFEPRPRRVSVLGGAPGQNSDRSMDMVSIHSLSELERLKLQETAYHELVARHFLSEFKPDRALPTDRPNTLEKWFLMLRGQDRAASLKTFGIRLEEVLVNELTRRKQRELTPTMQVEDINGSTGRRRRGNVVQRMLGRMRRFFSRRRNEPTLPREFTRRGRRGAVSADSADELENGALLLQILQLSQLSSPIGQRLLGSKRKMSLNPIAQQIPQIVETCCKFIEKHGLSSVGIFTIEYSLRRVLELRELFDKGLDIVLDDSVNVHDVAELLKEFFREMKDPLLPDDLYMSFLLTATLKPKDQVSALQLLVYLMPPCHSDTLERLLKALHKITENCEDSIGVDGQLVPGNRMTSTNLALVFGTALLKKGKLANKESRKTKLGIDHYVASVNVVRAMIDNWDILFQVPPHIQKEVAKRVWKSSPEALDFIRRRNLRKIQSARIKMEEDALLSDPVENSAEAQAAILAQSQPFDEDPEGAPDVHEVLNDNLNYDFEDESDFEDQDHLDLAEVPYLDVIPNNEDTDSDADVIPGPSEEPAVPASTAGSPDKEEGAAGNPPNADRPLPRVPQGKKGKFATRFFP</sequence>
<accession>B1AUC7</accession>
<accession>A5D6Q0</accession>
<accession>A6H5U8</accession>
<accession>A8IP50</accession>
<accession>B1AUC6</accession>
<accession>B1AUC8</accession>